<accession>Q31BA3</accession>
<keyword id="KW-0001">2Fe-2S</keyword>
<keyword id="KW-0028">Amino-acid biosynthesis</keyword>
<keyword id="KW-0100">Branched-chain amino acid biosynthesis</keyword>
<keyword id="KW-0408">Iron</keyword>
<keyword id="KW-0411">Iron-sulfur</keyword>
<keyword id="KW-0456">Lyase</keyword>
<keyword id="KW-0460">Magnesium</keyword>
<keyword id="KW-0479">Metal-binding</keyword>
<evidence type="ECO:0000255" key="1">
    <source>
        <dbReference type="HAMAP-Rule" id="MF_00012"/>
    </source>
</evidence>
<reference key="1">
    <citation type="journal article" date="2006" name="Science">
        <title>Genomic islands and the ecology and evolution of Prochlorococcus.</title>
        <authorList>
            <person name="Coleman M.L."/>
            <person name="Sullivan M.B."/>
            <person name="Martiny A.C."/>
            <person name="Steglich C."/>
            <person name="Barry K."/>
            <person name="Delong E.F."/>
            <person name="Chisholm S.W."/>
        </authorList>
    </citation>
    <scope>NUCLEOTIDE SEQUENCE [LARGE SCALE GENOMIC DNA]</scope>
    <source>
        <strain>MIT 9312</strain>
    </source>
</reference>
<protein>
    <recommendedName>
        <fullName evidence="1">Dihydroxy-acid dehydratase</fullName>
        <shortName evidence="1">DAD</shortName>
        <ecNumber evidence="1">4.2.1.9</ecNumber>
    </recommendedName>
</protein>
<organism>
    <name type="scientific">Prochlorococcus marinus (strain MIT 9312)</name>
    <dbReference type="NCBI Taxonomy" id="74546"/>
    <lineage>
        <taxon>Bacteria</taxon>
        <taxon>Bacillati</taxon>
        <taxon>Cyanobacteriota</taxon>
        <taxon>Cyanophyceae</taxon>
        <taxon>Synechococcales</taxon>
        <taxon>Prochlorococcaceae</taxon>
        <taxon>Prochlorococcus</taxon>
    </lineage>
</organism>
<proteinExistence type="inferred from homology"/>
<feature type="chain" id="PRO_1000001030" description="Dihydroxy-acid dehydratase">
    <location>
        <begin position="1"/>
        <end position="557"/>
    </location>
</feature>
<feature type="active site" description="Proton acceptor" evidence="1">
    <location>
        <position position="472"/>
    </location>
</feature>
<feature type="binding site" evidence="1">
    <location>
        <position position="49"/>
    </location>
    <ligand>
        <name>[2Fe-2S] cluster</name>
        <dbReference type="ChEBI" id="CHEBI:190135"/>
    </ligand>
</feature>
<feature type="binding site" evidence="1">
    <location>
        <position position="81"/>
    </location>
    <ligand>
        <name>Mg(2+)</name>
        <dbReference type="ChEBI" id="CHEBI:18420"/>
    </ligand>
</feature>
<feature type="binding site" evidence="1">
    <location>
        <position position="122"/>
    </location>
    <ligand>
        <name>[2Fe-2S] cluster</name>
        <dbReference type="ChEBI" id="CHEBI:190135"/>
    </ligand>
</feature>
<feature type="binding site" evidence="1">
    <location>
        <position position="123"/>
    </location>
    <ligand>
        <name>Mg(2+)</name>
        <dbReference type="ChEBI" id="CHEBI:18420"/>
    </ligand>
</feature>
<feature type="binding site" description="via carbamate group" evidence="1">
    <location>
        <position position="124"/>
    </location>
    <ligand>
        <name>Mg(2+)</name>
        <dbReference type="ChEBI" id="CHEBI:18420"/>
    </ligand>
</feature>
<feature type="binding site" evidence="1">
    <location>
        <position position="194"/>
    </location>
    <ligand>
        <name>[2Fe-2S] cluster</name>
        <dbReference type="ChEBI" id="CHEBI:190135"/>
    </ligand>
</feature>
<feature type="binding site" evidence="1">
    <location>
        <position position="446"/>
    </location>
    <ligand>
        <name>Mg(2+)</name>
        <dbReference type="ChEBI" id="CHEBI:18420"/>
    </ligand>
</feature>
<feature type="modified residue" description="N6-carboxylysine" evidence="1">
    <location>
        <position position="124"/>
    </location>
</feature>
<comment type="function">
    <text evidence="1">Functions in the biosynthesis of branched-chain amino acids. Catalyzes the dehydration of (2R,3R)-2,3-dihydroxy-3-methylpentanoate (2,3-dihydroxy-3-methylvalerate) into 2-oxo-3-methylpentanoate (2-oxo-3-methylvalerate) and of (2R)-2,3-dihydroxy-3-methylbutanoate (2,3-dihydroxyisovalerate) into 2-oxo-3-methylbutanoate (2-oxoisovalerate), the penultimate precursor to L-isoleucine and L-valine, respectively.</text>
</comment>
<comment type="catalytic activity">
    <reaction evidence="1">
        <text>(2R)-2,3-dihydroxy-3-methylbutanoate = 3-methyl-2-oxobutanoate + H2O</text>
        <dbReference type="Rhea" id="RHEA:24809"/>
        <dbReference type="ChEBI" id="CHEBI:11851"/>
        <dbReference type="ChEBI" id="CHEBI:15377"/>
        <dbReference type="ChEBI" id="CHEBI:49072"/>
        <dbReference type="EC" id="4.2.1.9"/>
    </reaction>
    <physiologicalReaction direction="left-to-right" evidence="1">
        <dbReference type="Rhea" id="RHEA:24810"/>
    </physiologicalReaction>
</comment>
<comment type="catalytic activity">
    <reaction evidence="1">
        <text>(2R,3R)-2,3-dihydroxy-3-methylpentanoate = (S)-3-methyl-2-oxopentanoate + H2O</text>
        <dbReference type="Rhea" id="RHEA:27694"/>
        <dbReference type="ChEBI" id="CHEBI:15377"/>
        <dbReference type="ChEBI" id="CHEBI:35146"/>
        <dbReference type="ChEBI" id="CHEBI:49258"/>
        <dbReference type="EC" id="4.2.1.9"/>
    </reaction>
    <physiologicalReaction direction="left-to-right" evidence="1">
        <dbReference type="Rhea" id="RHEA:27695"/>
    </physiologicalReaction>
</comment>
<comment type="cofactor">
    <cofactor evidence="1">
        <name>[2Fe-2S] cluster</name>
        <dbReference type="ChEBI" id="CHEBI:190135"/>
    </cofactor>
    <text evidence="1">Binds 1 [2Fe-2S] cluster per subunit. This cluster acts as a Lewis acid cofactor.</text>
</comment>
<comment type="cofactor">
    <cofactor evidence="1">
        <name>Mg(2+)</name>
        <dbReference type="ChEBI" id="CHEBI:18420"/>
    </cofactor>
</comment>
<comment type="pathway">
    <text evidence="1">Amino-acid biosynthesis; L-isoleucine biosynthesis; L-isoleucine from 2-oxobutanoate: step 3/4.</text>
</comment>
<comment type="pathway">
    <text evidence="1">Amino-acid biosynthesis; L-valine biosynthesis; L-valine from pyruvate: step 3/4.</text>
</comment>
<comment type="subunit">
    <text evidence="1">Homodimer.</text>
</comment>
<comment type="similarity">
    <text evidence="1">Belongs to the IlvD/Edd family.</text>
</comment>
<name>ILVD_PROM9</name>
<dbReference type="EC" id="4.2.1.9" evidence="1"/>
<dbReference type="EMBL" id="CP000111">
    <property type="protein sequence ID" value="ABB49842.1"/>
    <property type="molecule type" value="Genomic_DNA"/>
</dbReference>
<dbReference type="RefSeq" id="WP_011376337.1">
    <property type="nucleotide sequence ID" value="NC_007577.1"/>
</dbReference>
<dbReference type="SMR" id="Q31BA3"/>
<dbReference type="STRING" id="74546.PMT9312_0782"/>
<dbReference type="KEGG" id="pmi:PMT9312_0782"/>
<dbReference type="eggNOG" id="COG0129">
    <property type="taxonomic scope" value="Bacteria"/>
</dbReference>
<dbReference type="HOGENOM" id="CLU_014271_4_2_3"/>
<dbReference type="OrthoDB" id="9807077at2"/>
<dbReference type="UniPathway" id="UPA00047">
    <property type="reaction ID" value="UER00057"/>
</dbReference>
<dbReference type="UniPathway" id="UPA00049">
    <property type="reaction ID" value="UER00061"/>
</dbReference>
<dbReference type="Proteomes" id="UP000002715">
    <property type="component" value="Chromosome"/>
</dbReference>
<dbReference type="GO" id="GO:0051537">
    <property type="term" value="F:2 iron, 2 sulfur cluster binding"/>
    <property type="evidence" value="ECO:0007669"/>
    <property type="project" value="UniProtKB-UniRule"/>
</dbReference>
<dbReference type="GO" id="GO:0004160">
    <property type="term" value="F:dihydroxy-acid dehydratase activity"/>
    <property type="evidence" value="ECO:0007669"/>
    <property type="project" value="UniProtKB-UniRule"/>
</dbReference>
<dbReference type="GO" id="GO:0000287">
    <property type="term" value="F:magnesium ion binding"/>
    <property type="evidence" value="ECO:0007669"/>
    <property type="project" value="UniProtKB-UniRule"/>
</dbReference>
<dbReference type="GO" id="GO:0009097">
    <property type="term" value="P:isoleucine biosynthetic process"/>
    <property type="evidence" value="ECO:0007669"/>
    <property type="project" value="UniProtKB-UniRule"/>
</dbReference>
<dbReference type="GO" id="GO:0009099">
    <property type="term" value="P:L-valine biosynthetic process"/>
    <property type="evidence" value="ECO:0007669"/>
    <property type="project" value="UniProtKB-UniRule"/>
</dbReference>
<dbReference type="FunFam" id="3.50.30.80:FF:000001">
    <property type="entry name" value="Dihydroxy-acid dehydratase"/>
    <property type="match status" value="1"/>
</dbReference>
<dbReference type="Gene3D" id="3.50.30.80">
    <property type="entry name" value="IlvD/EDD C-terminal domain-like"/>
    <property type="match status" value="1"/>
</dbReference>
<dbReference type="HAMAP" id="MF_00012">
    <property type="entry name" value="IlvD"/>
    <property type="match status" value="1"/>
</dbReference>
<dbReference type="InterPro" id="IPR050165">
    <property type="entry name" value="DHAD_IlvD/Edd"/>
</dbReference>
<dbReference type="InterPro" id="IPR042096">
    <property type="entry name" value="Dihydro-acid_dehy_C"/>
</dbReference>
<dbReference type="InterPro" id="IPR004404">
    <property type="entry name" value="DihydroxyA_deHydtase"/>
</dbReference>
<dbReference type="InterPro" id="IPR020558">
    <property type="entry name" value="DiOHA_6PGluconate_deHydtase_CS"/>
</dbReference>
<dbReference type="InterPro" id="IPR056740">
    <property type="entry name" value="ILV_EDD_C"/>
</dbReference>
<dbReference type="InterPro" id="IPR000581">
    <property type="entry name" value="ILV_EDD_N"/>
</dbReference>
<dbReference type="InterPro" id="IPR037237">
    <property type="entry name" value="IlvD/EDD_N"/>
</dbReference>
<dbReference type="NCBIfam" id="TIGR00110">
    <property type="entry name" value="ilvD"/>
    <property type="match status" value="1"/>
</dbReference>
<dbReference type="NCBIfam" id="NF002068">
    <property type="entry name" value="PRK00911.1"/>
    <property type="match status" value="1"/>
</dbReference>
<dbReference type="PANTHER" id="PTHR21000">
    <property type="entry name" value="DIHYDROXY-ACID DEHYDRATASE DAD"/>
    <property type="match status" value="1"/>
</dbReference>
<dbReference type="PANTHER" id="PTHR21000:SF5">
    <property type="entry name" value="DIHYDROXY-ACID DEHYDRATASE, MITOCHONDRIAL"/>
    <property type="match status" value="1"/>
</dbReference>
<dbReference type="Pfam" id="PF24877">
    <property type="entry name" value="ILV_EDD_C"/>
    <property type="match status" value="1"/>
</dbReference>
<dbReference type="Pfam" id="PF00920">
    <property type="entry name" value="ILVD_EDD_N"/>
    <property type="match status" value="1"/>
</dbReference>
<dbReference type="SUPFAM" id="SSF143975">
    <property type="entry name" value="IlvD/EDD N-terminal domain-like"/>
    <property type="match status" value="1"/>
</dbReference>
<dbReference type="SUPFAM" id="SSF52016">
    <property type="entry name" value="LeuD/IlvD-like"/>
    <property type="match status" value="1"/>
</dbReference>
<dbReference type="PROSITE" id="PS00886">
    <property type="entry name" value="ILVD_EDD_1"/>
    <property type="match status" value="1"/>
</dbReference>
<dbReference type="PROSITE" id="PS00887">
    <property type="entry name" value="ILVD_EDD_2"/>
    <property type="match status" value="1"/>
</dbReference>
<sequence>MNKLRSSAITQGVQRSPNRSMLRAVGFNDEDFNKPIVGVANGYSTITPCNMGLNKLALKAEESIKRSGGMPQMFGTITVSDGISMGTEGMKYSLVSREVIADSIETACNAQSMDGVLAIGGCDKNMPGAMIAIARMNIPSIFIYGGTIKPGKLHGEDLTVVSAFEAVGQLTAGKINEERLIQVEKNCIPGAGSCGGMFTANTMSAVIEVLGLSLPHSSTMAAEDLEKELSADKSAEILVSAIEKDIRPLDLMTKKAFENAISVIMAIGGSTNAVLHILAIANTAGIDININDFERIRQKVPVICDLKPSGKYVTVDLHKAGGIPQVMKILLNAGLIHGDCKNIEGKTISEYLQNIPDKPPTNQNVIRDIDDPLYKKGHLAILKGNLASEGSVAKISGVKNPVLTGPAKIFESEEDCLKSILNNDIKAGDVVVIRNEGPVGGPGMREMLAPTSAIVGQGLGEKVALITDGRFSGGTYGLVVGHIAPEAAVGGNIALIKQGDLITVDAVKQLIEVDLSDEELEKRKKDWVKPIQKYKRGILSKYSRIVSTSSLGAVTDL</sequence>
<gene>
    <name evidence="1" type="primary">ilvD</name>
    <name type="ordered locus">PMT9312_0782</name>
</gene>